<accession>Q99527</accession>
<accession>A8K6C5</accession>
<accession>B5BUJ1</accession>
<accession>O00143</accession>
<accession>O43494</accession>
<accession>Q13631</accession>
<accession>Q6FHL1</accession>
<accession>Q96F42</accession>
<accession>Q99981</accession>
<feature type="chain" id="PRO_0000069310" description="G-protein coupled estrogen receptor 1">
    <location>
        <begin position="1"/>
        <end position="375"/>
    </location>
</feature>
<feature type="topological domain" description="Extracellular" evidence="2">
    <location>
        <begin position="1"/>
        <end position="62"/>
    </location>
</feature>
<feature type="transmembrane region" description="Helical; Name=1" evidence="2">
    <location>
        <begin position="63"/>
        <end position="84"/>
    </location>
</feature>
<feature type="topological domain" description="Cytoplasmic" evidence="2">
    <location>
        <begin position="85"/>
        <end position="96"/>
    </location>
</feature>
<feature type="transmembrane region" description="Helical; Name=2" evidence="2">
    <location>
        <begin position="97"/>
        <end position="120"/>
    </location>
</feature>
<feature type="topological domain" description="Extracellular" evidence="2">
    <location>
        <begin position="121"/>
        <end position="132"/>
    </location>
</feature>
<feature type="transmembrane region" description="Helical; Name=3" evidence="2">
    <location>
        <begin position="133"/>
        <end position="153"/>
    </location>
</feature>
<feature type="topological domain" description="Cytoplasmic" evidence="2">
    <location>
        <begin position="154"/>
        <end position="175"/>
    </location>
</feature>
<feature type="transmembrane region" description="Helical; Name=4" evidence="2">
    <location>
        <begin position="176"/>
        <end position="194"/>
    </location>
</feature>
<feature type="topological domain" description="Extracellular" evidence="2">
    <location>
        <begin position="195"/>
        <end position="220"/>
    </location>
</feature>
<feature type="transmembrane region" description="Helical; Name=5" evidence="2">
    <location>
        <begin position="221"/>
        <end position="236"/>
    </location>
</feature>
<feature type="topological domain" description="Cytoplasmic" evidence="2">
    <location>
        <begin position="237"/>
        <end position="259"/>
    </location>
</feature>
<feature type="transmembrane region" description="Helical; Name=6" evidence="2">
    <location>
        <begin position="260"/>
        <end position="280"/>
    </location>
</feature>
<feature type="topological domain" description="Extracellular" evidence="2">
    <location>
        <begin position="281"/>
        <end position="306"/>
    </location>
</feature>
<feature type="transmembrane region" description="Helical; Name=7" evidence="2">
    <location>
        <begin position="307"/>
        <end position="327"/>
    </location>
</feature>
<feature type="topological domain" description="Cytoplasmic" evidence="2">
    <location>
        <begin position="328"/>
        <end position="375"/>
    </location>
</feature>
<feature type="modified residue" description="N-acetylmethionine" evidence="40">
    <location>
        <position position="1"/>
    </location>
</feature>
<feature type="glycosylation site" description="N-linked (GlcNAc...) asparagine" evidence="2">
    <location>
        <position position="25"/>
    </location>
</feature>
<feature type="glycosylation site" description="N-linked (GlcNAc...) asparagine" evidence="2">
    <location>
        <position position="32"/>
    </location>
</feature>
<feature type="glycosylation site" description="N-linked (GlcNAc...) asparagine" evidence="2">
    <location>
        <position position="44"/>
    </location>
</feature>
<feature type="disulfide bond" evidence="3">
    <location>
        <begin position="130"/>
        <end position="207"/>
    </location>
</feature>
<feature type="sequence variant" id="VAR_033319" description="In dbSNP:rs11544331." evidence="6 10">
    <original>P</original>
    <variation>L</variation>
    <location>
        <position position="16"/>
    </location>
</feature>
<feature type="sequence conflict" description="In Ref. 6; AAC52027." evidence="28" ref="6">
    <original>QP</original>
    <variation>HA</variation>
    <location>
        <begin position="20"/>
        <end position="21"/>
    </location>
</feature>
<feature type="sequence conflict" description="In Ref. 7; AAB02736." evidence="28" ref="7">
    <location>
        <begin position="32"/>
        <end position="49"/>
    </location>
</feature>
<feature type="sequence conflict" description="In Ref. 7; AAB02736." evidence="28" ref="7">
    <original>A</original>
    <variation>G</variation>
    <location>
        <position position="104"/>
    </location>
</feature>
<feature type="sequence conflict" description="In Ref. 7; AAB02736." evidence="28" ref="7">
    <original>NMYSSVF</original>
    <variation>QHVQAASS</variation>
    <location>
        <begin position="140"/>
        <end position="146"/>
    </location>
</feature>
<feature type="sequence conflict" description="In Ref. 7; AAB02736." evidence="28" ref="7">
    <original>G</original>
    <variation>A</variation>
    <location>
        <position position="179"/>
    </location>
</feature>
<feature type="sequence conflict" description="In Ref. 7; AAB02736." evidence="28" ref="7">
    <original>A</original>
    <variation>S</variation>
    <location>
        <position position="184"/>
    </location>
</feature>
<feature type="sequence conflict" description="In Ref. 2; AAC51173." evidence="28" ref="2">
    <original>A</original>
    <variation>T</variation>
    <location>
        <position position="312"/>
    </location>
</feature>
<feature type="sequence conflict" description="In Ref. 7; AAB02736." evidence="28" ref="7">
    <original>N</original>
    <variation>T</variation>
    <location>
        <position position="320"/>
    </location>
</feature>
<feature type="sequence conflict" description="In Ref. 7; AAB02736." evidence="28" ref="7">
    <original>A</original>
    <variation>V</variation>
    <location>
        <position position="355"/>
    </location>
</feature>
<feature type="sequence conflict" description="In Ref. 7; AAB02736." evidence="28" ref="7">
    <original>A</original>
    <variation>V</variation>
    <location>
        <position position="358"/>
    </location>
</feature>
<feature type="helix" evidence="41">
    <location>
        <begin position="53"/>
        <end position="86"/>
    </location>
</feature>
<feature type="helix" evidence="41">
    <location>
        <begin position="88"/>
        <end position="90"/>
    </location>
</feature>
<feature type="helix" evidence="41">
    <location>
        <begin position="93"/>
        <end position="115"/>
    </location>
</feature>
<feature type="turn" evidence="41">
    <location>
        <begin position="116"/>
        <end position="118"/>
    </location>
</feature>
<feature type="helix" evidence="41">
    <location>
        <begin position="121"/>
        <end position="124"/>
    </location>
</feature>
<feature type="helix" evidence="41">
    <location>
        <begin position="127"/>
        <end position="160"/>
    </location>
</feature>
<feature type="strand" evidence="41">
    <location>
        <begin position="161"/>
        <end position="164"/>
    </location>
</feature>
<feature type="turn" evidence="41">
    <location>
        <begin position="166"/>
        <end position="168"/>
    </location>
</feature>
<feature type="helix" evidence="41">
    <location>
        <begin position="171"/>
        <end position="199"/>
    </location>
</feature>
<feature type="helix" evidence="41">
    <location>
        <begin position="212"/>
        <end position="222"/>
    </location>
</feature>
<feature type="helix" evidence="41">
    <location>
        <begin position="224"/>
        <end position="245"/>
    </location>
</feature>
<feature type="helix" evidence="41">
    <location>
        <begin position="255"/>
        <end position="284"/>
    </location>
</feature>
<feature type="helix" evidence="41">
    <location>
        <begin position="303"/>
        <end position="324"/>
    </location>
</feature>
<feature type="turn" evidence="41">
    <location>
        <begin position="325"/>
        <end position="327"/>
    </location>
</feature>
<feature type="helix" evidence="41">
    <location>
        <begin position="329"/>
        <end position="341"/>
    </location>
</feature>
<organism>
    <name type="scientific">Homo sapiens</name>
    <name type="common">Human</name>
    <dbReference type="NCBI Taxonomy" id="9606"/>
    <lineage>
        <taxon>Eukaryota</taxon>
        <taxon>Metazoa</taxon>
        <taxon>Chordata</taxon>
        <taxon>Craniata</taxon>
        <taxon>Vertebrata</taxon>
        <taxon>Euteleostomi</taxon>
        <taxon>Mammalia</taxon>
        <taxon>Eutheria</taxon>
        <taxon>Euarchontoglires</taxon>
        <taxon>Primates</taxon>
        <taxon>Haplorrhini</taxon>
        <taxon>Catarrhini</taxon>
        <taxon>Hominidae</taxon>
        <taxon>Homo</taxon>
    </lineage>
</organism>
<protein>
    <recommendedName>
        <fullName evidence="28">G-protein coupled estrogen receptor 1</fullName>
    </recommendedName>
    <alternativeName>
        <fullName>Chemoattractant receptor-like 2</fullName>
    </alternativeName>
    <alternativeName>
        <fullName>Flow-induced endothelial G-protein coupled receptor 1</fullName>
        <shortName>FEG-1</shortName>
    </alternativeName>
    <alternativeName>
        <fullName>G protein-coupled estrogen receptor 1</fullName>
    </alternativeName>
    <alternativeName>
        <fullName evidence="26 27">G-protein coupled receptor 30</fullName>
    </alternativeName>
    <alternativeName>
        <fullName>GPCR-Br</fullName>
    </alternativeName>
    <alternativeName>
        <fullName>IL8-related receptor DRY12</fullName>
    </alternativeName>
    <alternativeName>
        <fullName>Lymphocyte-derived G-protein coupled receptor</fullName>
        <shortName>LYGPR</shortName>
    </alternativeName>
    <alternativeName>
        <fullName>Membrane estrogen receptor</fullName>
        <shortName>mER</shortName>
    </alternativeName>
</protein>
<dbReference type="EMBL" id="Y08162">
    <property type="protein sequence ID" value="CAA69354.1"/>
    <property type="molecule type" value="mRNA"/>
</dbReference>
<dbReference type="EMBL" id="U77827">
    <property type="protein sequence ID" value="AAC51173.1"/>
    <property type="molecule type" value="Genomic_DNA"/>
</dbReference>
<dbReference type="EMBL" id="AF015257">
    <property type="protein sequence ID" value="AAC51904.1"/>
    <property type="molecule type" value="mRNA"/>
</dbReference>
<dbReference type="EMBL" id="X98510">
    <property type="protein sequence ID" value="CAA67133.1"/>
    <property type="molecule type" value="mRNA"/>
</dbReference>
<dbReference type="EMBL" id="U63917">
    <property type="protein sequence ID" value="AAB88017.1"/>
    <property type="molecule type" value="mRNA"/>
</dbReference>
<dbReference type="EMBL" id="AF027956">
    <property type="protein sequence ID" value="AAC52027.1"/>
    <property type="molecule type" value="Genomic_DNA"/>
</dbReference>
<dbReference type="EMBL" id="U58828">
    <property type="protein sequence ID" value="AAB02736.1"/>
    <property type="molecule type" value="mRNA"/>
</dbReference>
<dbReference type="EMBL" id="CR541741">
    <property type="protein sequence ID" value="CAG46541.1"/>
    <property type="molecule type" value="mRNA"/>
</dbReference>
<dbReference type="EMBL" id="AK291590">
    <property type="protein sequence ID" value="BAF84279.1"/>
    <property type="molecule type" value="mRNA"/>
</dbReference>
<dbReference type="EMBL" id="AB451427">
    <property type="protein sequence ID" value="BAG70241.1"/>
    <property type="molecule type" value="mRNA"/>
</dbReference>
<dbReference type="EMBL" id="CH236953">
    <property type="protein sequence ID" value="EAL23938.1"/>
    <property type="molecule type" value="Genomic_DNA"/>
</dbReference>
<dbReference type="EMBL" id="CH471144">
    <property type="protein sequence ID" value="EAW87194.1"/>
    <property type="molecule type" value="Genomic_DNA"/>
</dbReference>
<dbReference type="EMBL" id="BC011634">
    <property type="protein sequence ID" value="AAH11634.1"/>
    <property type="molecule type" value="mRNA"/>
</dbReference>
<dbReference type="CCDS" id="CCDS5322.1"/>
<dbReference type="PIR" id="G02670">
    <property type="entry name" value="G02670"/>
</dbReference>
<dbReference type="PIR" id="JC5069">
    <property type="entry name" value="JC5069"/>
</dbReference>
<dbReference type="RefSeq" id="NP_001035055.1">
    <property type="nucleotide sequence ID" value="NM_001039966.2"/>
</dbReference>
<dbReference type="RefSeq" id="NP_001091671.1">
    <property type="nucleotide sequence ID" value="NM_001098201.3"/>
</dbReference>
<dbReference type="RefSeq" id="NP_001496.1">
    <property type="nucleotide sequence ID" value="NM_001505.3"/>
</dbReference>
<dbReference type="PDB" id="8XOF">
    <property type="method" value="EM"/>
    <property type="resolution" value="2.60 A"/>
    <property type="chains" value="R=1-375"/>
</dbReference>
<dbReference type="PDB" id="8XOG">
    <property type="method" value="EM"/>
    <property type="resolution" value="2.90 A"/>
    <property type="chains" value="R=1-375"/>
</dbReference>
<dbReference type="PDB" id="8XOH">
    <property type="method" value="EM"/>
    <property type="resolution" value="3.20 A"/>
    <property type="chains" value="R=1-375"/>
</dbReference>
<dbReference type="PDB" id="8XOI">
    <property type="method" value="EM"/>
    <property type="resolution" value="3.20 A"/>
    <property type="chains" value="R=1-375"/>
</dbReference>
<dbReference type="PDB" id="8XOJ">
    <property type="method" value="EM"/>
    <property type="resolution" value="3.10 A"/>
    <property type="chains" value="R=1-375"/>
</dbReference>
<dbReference type="PDBsum" id="8XOF"/>
<dbReference type="PDBsum" id="8XOG"/>
<dbReference type="PDBsum" id="8XOH"/>
<dbReference type="PDBsum" id="8XOI"/>
<dbReference type="PDBsum" id="8XOJ"/>
<dbReference type="EMDB" id="EMD-38527"/>
<dbReference type="EMDB" id="EMD-38528"/>
<dbReference type="EMDB" id="EMD-38529"/>
<dbReference type="EMDB" id="EMD-38530"/>
<dbReference type="EMDB" id="EMD-38531"/>
<dbReference type="SMR" id="Q99527"/>
<dbReference type="BioGRID" id="109110">
    <property type="interactions" value="4"/>
</dbReference>
<dbReference type="CORUM" id="Q99527"/>
<dbReference type="FunCoup" id="Q99527">
    <property type="interactions" value="533"/>
</dbReference>
<dbReference type="IntAct" id="Q99527">
    <property type="interactions" value="1"/>
</dbReference>
<dbReference type="STRING" id="9606.ENSP00000380281"/>
<dbReference type="BindingDB" id="Q99527"/>
<dbReference type="ChEMBL" id="CHEMBL5872"/>
<dbReference type="DrugBank" id="DB00783">
    <property type="generic name" value="Estradiol"/>
</dbReference>
<dbReference type="DrugBank" id="DB13952">
    <property type="generic name" value="Estradiol acetate"/>
</dbReference>
<dbReference type="DrugBank" id="DB13953">
    <property type="generic name" value="Estradiol benzoate"/>
</dbReference>
<dbReference type="DrugBank" id="DB13954">
    <property type="generic name" value="Estradiol cypionate"/>
</dbReference>
<dbReference type="DrugBank" id="DB13955">
    <property type="generic name" value="Estradiol dienanthate"/>
</dbReference>
<dbReference type="DrugBank" id="DB13956">
    <property type="generic name" value="Estradiol valerate"/>
</dbReference>
<dbReference type="DrugBank" id="DB01645">
    <property type="generic name" value="Genistein"/>
</dbReference>
<dbReference type="DrugBank" id="DB18091">
    <property type="generic name" value="LNS-8801"/>
</dbReference>
<dbReference type="DrugBank" id="DB05939">
    <property type="generic name" value="MK-0354"/>
</dbReference>
<dbReference type="DrugCentral" id="Q99527"/>
<dbReference type="GuidetoPHARMACOLOGY" id="221"/>
<dbReference type="TCDB" id="9.A.14.13.19">
    <property type="family name" value="the g-protein-coupled receptor (gpcr) family"/>
</dbReference>
<dbReference type="GlyCosmos" id="Q99527">
    <property type="glycosylation" value="3 sites, No reported glycans"/>
</dbReference>
<dbReference type="GlyGen" id="Q99527">
    <property type="glycosylation" value="3 sites"/>
</dbReference>
<dbReference type="iPTMnet" id="Q99527"/>
<dbReference type="PhosphoSitePlus" id="Q99527"/>
<dbReference type="BioMuta" id="GPER1"/>
<dbReference type="DMDM" id="3023539"/>
<dbReference type="MassIVE" id="Q99527"/>
<dbReference type="PaxDb" id="9606-ENSP00000380281"/>
<dbReference type="PeptideAtlas" id="Q99527"/>
<dbReference type="Antibodypedia" id="10887">
    <property type="antibodies" value="426 antibodies from 33 providers"/>
</dbReference>
<dbReference type="DNASU" id="2852"/>
<dbReference type="Ensembl" id="ENST00000297469.3">
    <property type="protein sequence ID" value="ENSP00000297469.3"/>
    <property type="gene ID" value="ENSG00000164850.16"/>
</dbReference>
<dbReference type="Ensembl" id="ENST00000397088.4">
    <property type="protein sequence ID" value="ENSP00000380277.3"/>
    <property type="gene ID" value="ENSG00000164850.16"/>
</dbReference>
<dbReference type="Ensembl" id="ENST00000397092.5">
    <property type="protein sequence ID" value="ENSP00000380281.1"/>
    <property type="gene ID" value="ENSG00000164850.16"/>
</dbReference>
<dbReference type="Ensembl" id="ENST00000401670.1">
    <property type="protein sequence ID" value="ENSP00000385151.1"/>
    <property type="gene ID" value="ENSG00000164850.16"/>
</dbReference>
<dbReference type="GeneID" id="2852"/>
<dbReference type="KEGG" id="hsa:2852"/>
<dbReference type="MANE-Select" id="ENST00000397088.4">
    <property type="protein sequence ID" value="ENSP00000380277.3"/>
    <property type="RefSeq nucleotide sequence ID" value="NM_001098201.3"/>
    <property type="RefSeq protein sequence ID" value="NP_001091671.1"/>
</dbReference>
<dbReference type="UCSC" id="uc003sjz.1">
    <property type="organism name" value="human"/>
</dbReference>
<dbReference type="AGR" id="HGNC:4485"/>
<dbReference type="CTD" id="2852"/>
<dbReference type="DisGeNET" id="2852"/>
<dbReference type="GeneCards" id="GPER1"/>
<dbReference type="HGNC" id="HGNC:4485">
    <property type="gene designation" value="GPER1"/>
</dbReference>
<dbReference type="HPA" id="ENSG00000164850">
    <property type="expression patterns" value="Tissue enhanced (stomach)"/>
</dbReference>
<dbReference type="MIM" id="601805">
    <property type="type" value="gene"/>
</dbReference>
<dbReference type="neXtProt" id="NX_Q99527"/>
<dbReference type="OpenTargets" id="ENSG00000164850"/>
<dbReference type="PharmGKB" id="PA28873"/>
<dbReference type="VEuPathDB" id="HostDB:ENSG00000164850"/>
<dbReference type="eggNOG" id="ENOG502QU56">
    <property type="taxonomic scope" value="Eukaryota"/>
</dbReference>
<dbReference type="GeneTree" id="ENSGT00940000154307"/>
<dbReference type="HOGENOM" id="CLU_009579_8_3_1"/>
<dbReference type="InParanoid" id="Q99527"/>
<dbReference type="OMA" id="FRTKQHA"/>
<dbReference type="OrthoDB" id="5957382at2759"/>
<dbReference type="PAN-GO" id="Q99527">
    <property type="GO annotations" value="4 GO annotations based on evolutionary models"/>
</dbReference>
<dbReference type="PhylomeDB" id="Q99527"/>
<dbReference type="TreeFam" id="TF333506"/>
<dbReference type="PathwayCommons" id="Q99527"/>
<dbReference type="Reactome" id="R-HSA-375276">
    <property type="pathway name" value="Peptide ligand-binding receptors"/>
</dbReference>
<dbReference type="Reactome" id="R-HSA-418594">
    <property type="pathway name" value="G alpha (i) signalling events"/>
</dbReference>
<dbReference type="Reactome" id="R-HSA-9634597">
    <property type="pathway name" value="GPER1 signaling"/>
</dbReference>
<dbReference type="SignaLink" id="Q99527"/>
<dbReference type="SIGNOR" id="Q99527"/>
<dbReference type="BioGRID-ORCS" id="2852">
    <property type="hits" value="13 hits in 1132 CRISPR screens"/>
</dbReference>
<dbReference type="GeneWiki" id="GPR30"/>
<dbReference type="GenomeRNAi" id="2852"/>
<dbReference type="Pharos" id="Q99527">
    <property type="development level" value="Tchem"/>
</dbReference>
<dbReference type="PRO" id="PR:Q99527"/>
<dbReference type="Proteomes" id="UP000005640">
    <property type="component" value="Chromosome 7"/>
</dbReference>
<dbReference type="RNAct" id="Q99527">
    <property type="molecule type" value="protein"/>
</dbReference>
<dbReference type="Bgee" id="ENSG00000164850">
    <property type="expression patterns" value="Expressed in body of stomach and 131 other cell types or tissues"/>
</dbReference>
<dbReference type="ExpressionAtlas" id="Q99527">
    <property type="expression patterns" value="baseline and differential"/>
</dbReference>
<dbReference type="GO" id="GO:0030424">
    <property type="term" value="C:axon"/>
    <property type="evidence" value="ECO:0000250"/>
    <property type="project" value="UniProtKB"/>
</dbReference>
<dbReference type="GO" id="GO:0043679">
    <property type="term" value="C:axon terminus"/>
    <property type="evidence" value="ECO:0000250"/>
    <property type="project" value="UniProtKB"/>
</dbReference>
<dbReference type="GO" id="GO:0005737">
    <property type="term" value="C:cytoplasm"/>
    <property type="evidence" value="ECO:0000250"/>
    <property type="project" value="UniProtKB"/>
</dbReference>
<dbReference type="GO" id="GO:0030659">
    <property type="term" value="C:cytoplasmic vesicle membrane"/>
    <property type="evidence" value="ECO:0000314"/>
    <property type="project" value="UniProtKB"/>
</dbReference>
<dbReference type="GO" id="GO:0005829">
    <property type="term" value="C:cytosol"/>
    <property type="evidence" value="ECO:0000314"/>
    <property type="project" value="HPA"/>
</dbReference>
<dbReference type="GO" id="GO:0030425">
    <property type="term" value="C:dendrite"/>
    <property type="evidence" value="ECO:0000250"/>
    <property type="project" value="UniProtKB"/>
</dbReference>
<dbReference type="GO" id="GO:0043198">
    <property type="term" value="C:dendritic shaft"/>
    <property type="evidence" value="ECO:0000250"/>
    <property type="project" value="UniProtKB"/>
</dbReference>
<dbReference type="GO" id="GO:0044327">
    <property type="term" value="C:dendritic spine head"/>
    <property type="evidence" value="ECO:0000250"/>
    <property type="project" value="UniProtKB"/>
</dbReference>
<dbReference type="GO" id="GO:0032591">
    <property type="term" value="C:dendritic spine membrane"/>
    <property type="evidence" value="ECO:0000250"/>
    <property type="project" value="UniProtKB"/>
</dbReference>
<dbReference type="GO" id="GO:0005769">
    <property type="term" value="C:early endosome"/>
    <property type="evidence" value="ECO:0000314"/>
    <property type="project" value="UniProtKB"/>
</dbReference>
<dbReference type="GO" id="GO:0005783">
    <property type="term" value="C:endoplasmic reticulum"/>
    <property type="evidence" value="ECO:0000314"/>
    <property type="project" value="UniProtKB"/>
</dbReference>
<dbReference type="GO" id="GO:0005789">
    <property type="term" value="C:endoplasmic reticulum membrane"/>
    <property type="evidence" value="ECO:0007669"/>
    <property type="project" value="UniProtKB-SubCell"/>
</dbReference>
<dbReference type="GO" id="GO:0005794">
    <property type="term" value="C:Golgi apparatus"/>
    <property type="evidence" value="ECO:0000314"/>
    <property type="project" value="UniProtKB"/>
</dbReference>
<dbReference type="GO" id="GO:0000139">
    <property type="term" value="C:Golgi membrane"/>
    <property type="evidence" value="ECO:0007669"/>
    <property type="project" value="UniProtKB-SubCell"/>
</dbReference>
<dbReference type="GO" id="GO:0098686">
    <property type="term" value="C:hippocampal mossy fiber to CA3 synapse"/>
    <property type="evidence" value="ECO:0007669"/>
    <property type="project" value="Ensembl"/>
</dbReference>
<dbReference type="GO" id="GO:0043231">
    <property type="term" value="C:intracellular membrane-bounded organelle"/>
    <property type="evidence" value="ECO:0000314"/>
    <property type="project" value="HPA"/>
</dbReference>
<dbReference type="GO" id="GO:0045095">
    <property type="term" value="C:keratin filament"/>
    <property type="evidence" value="ECO:0000314"/>
    <property type="project" value="UniProtKB"/>
</dbReference>
<dbReference type="GO" id="GO:0031966">
    <property type="term" value="C:mitochondrial membrane"/>
    <property type="evidence" value="ECO:0000250"/>
    <property type="project" value="UniProtKB"/>
</dbReference>
<dbReference type="GO" id="GO:0005635">
    <property type="term" value="C:nuclear envelope"/>
    <property type="evidence" value="ECO:0000314"/>
    <property type="project" value="UniProtKB"/>
</dbReference>
<dbReference type="GO" id="GO:0005730">
    <property type="term" value="C:nucleolus"/>
    <property type="evidence" value="ECO:0000314"/>
    <property type="project" value="HPA"/>
</dbReference>
<dbReference type="GO" id="GO:0005654">
    <property type="term" value="C:nucleoplasm"/>
    <property type="evidence" value="ECO:0000314"/>
    <property type="project" value="HPA"/>
</dbReference>
<dbReference type="GO" id="GO:0005634">
    <property type="term" value="C:nucleus"/>
    <property type="evidence" value="ECO:0000314"/>
    <property type="project" value="UniProtKB"/>
</dbReference>
<dbReference type="GO" id="GO:0048471">
    <property type="term" value="C:perinuclear region of cytoplasm"/>
    <property type="evidence" value="ECO:0000314"/>
    <property type="project" value="UniProtKB"/>
</dbReference>
<dbReference type="GO" id="GO:0005886">
    <property type="term" value="C:plasma membrane"/>
    <property type="evidence" value="ECO:0000314"/>
    <property type="project" value="UniProtKB"/>
</dbReference>
<dbReference type="GO" id="GO:0014069">
    <property type="term" value="C:postsynaptic density"/>
    <property type="evidence" value="ECO:0000250"/>
    <property type="project" value="UniProtKB"/>
</dbReference>
<dbReference type="GO" id="GO:0048786">
    <property type="term" value="C:presynaptic active zone"/>
    <property type="evidence" value="ECO:0000250"/>
    <property type="project" value="UniProtKB"/>
</dbReference>
<dbReference type="GO" id="GO:0042734">
    <property type="term" value="C:presynaptic membrane"/>
    <property type="evidence" value="ECO:0000250"/>
    <property type="project" value="UniProtKB"/>
</dbReference>
<dbReference type="GO" id="GO:0055037">
    <property type="term" value="C:recycling endosome"/>
    <property type="evidence" value="ECO:0000314"/>
    <property type="project" value="UniProtKB"/>
</dbReference>
<dbReference type="GO" id="GO:0005802">
    <property type="term" value="C:trans-Golgi network"/>
    <property type="evidence" value="ECO:0000314"/>
    <property type="project" value="UniProtKB"/>
</dbReference>
<dbReference type="GO" id="GO:0003682">
    <property type="term" value="F:chromatin binding"/>
    <property type="evidence" value="ECO:0000314"/>
    <property type="project" value="UniProtKB"/>
</dbReference>
<dbReference type="GO" id="GO:0038054">
    <property type="term" value="F:G protein-coupled estrogen receptor activity"/>
    <property type="evidence" value="ECO:0000250"/>
    <property type="project" value="UniProtKB"/>
</dbReference>
<dbReference type="GO" id="GO:0004930">
    <property type="term" value="F:G protein-coupled receptor activity"/>
    <property type="evidence" value="ECO:0000304"/>
    <property type="project" value="ProtInc"/>
</dbReference>
<dbReference type="GO" id="GO:0030284">
    <property type="term" value="F:nuclear estrogen receptor activity"/>
    <property type="evidence" value="ECO:0000314"/>
    <property type="project" value="UniProtKB"/>
</dbReference>
<dbReference type="GO" id="GO:0005496">
    <property type="term" value="F:steroid binding"/>
    <property type="evidence" value="ECO:0000314"/>
    <property type="project" value="UniProtKB"/>
</dbReference>
<dbReference type="GO" id="GO:1990239">
    <property type="term" value="F:steroid hormone binding"/>
    <property type="evidence" value="ECO:0000314"/>
    <property type="project" value="UniProtKB"/>
</dbReference>
<dbReference type="GO" id="GO:0007189">
    <property type="term" value="P:adenylate cyclase-activating G protein-coupled receptor signaling pathway"/>
    <property type="evidence" value="ECO:0000314"/>
    <property type="project" value="UniProtKB"/>
</dbReference>
<dbReference type="GO" id="GO:0030263">
    <property type="term" value="P:apoptotic chromosome condensation"/>
    <property type="evidence" value="ECO:0000250"/>
    <property type="project" value="UniProtKB"/>
</dbReference>
<dbReference type="GO" id="GO:0030154">
    <property type="term" value="P:cell differentiation"/>
    <property type="evidence" value="ECO:0007669"/>
    <property type="project" value="UniProtKB-KW"/>
</dbReference>
<dbReference type="GO" id="GO:0071392">
    <property type="term" value="P:cellular response to estradiol stimulus"/>
    <property type="evidence" value="ECO:0000314"/>
    <property type="project" value="UniProtKB"/>
</dbReference>
<dbReference type="GO" id="GO:0071333">
    <property type="term" value="P:cellular response to glucose stimulus"/>
    <property type="evidence" value="ECO:0000250"/>
    <property type="project" value="UniProtKB"/>
</dbReference>
<dbReference type="GO" id="GO:0071389">
    <property type="term" value="P:cellular response to mineralocorticoid stimulus"/>
    <property type="evidence" value="ECO:0000250"/>
    <property type="project" value="UniProtKB"/>
</dbReference>
<dbReference type="GO" id="GO:0071375">
    <property type="term" value="P:cellular response to peptide hormone stimulus"/>
    <property type="evidence" value="ECO:0000314"/>
    <property type="project" value="UniProtKB"/>
</dbReference>
<dbReference type="GO" id="GO:0071356">
    <property type="term" value="P:cellular response to tumor necrosis factor"/>
    <property type="evidence" value="ECO:0000314"/>
    <property type="project" value="UniProtKB"/>
</dbReference>
<dbReference type="GO" id="GO:0007186">
    <property type="term" value="P:G protein-coupled receptor signaling pathway"/>
    <property type="evidence" value="ECO:0000315"/>
    <property type="project" value="AgBase"/>
</dbReference>
<dbReference type="GO" id="GO:0006954">
    <property type="term" value="P:inflammatory response"/>
    <property type="evidence" value="ECO:0007669"/>
    <property type="project" value="UniProtKB-KW"/>
</dbReference>
<dbReference type="GO" id="GO:0045087">
    <property type="term" value="P:innate immune response"/>
    <property type="evidence" value="ECO:0007669"/>
    <property type="project" value="UniProtKB-KW"/>
</dbReference>
<dbReference type="GO" id="GO:0010948">
    <property type="term" value="P:negative regulation of cell cycle process"/>
    <property type="evidence" value="ECO:0000315"/>
    <property type="project" value="AgBase"/>
</dbReference>
<dbReference type="GO" id="GO:0008285">
    <property type="term" value="P:negative regulation of cell population proliferation"/>
    <property type="evidence" value="ECO:0000250"/>
    <property type="project" value="UniProtKB"/>
</dbReference>
<dbReference type="GO" id="GO:0070373">
    <property type="term" value="P:negative regulation of ERK1 and ERK2 cascade"/>
    <property type="evidence" value="ECO:0000315"/>
    <property type="project" value="AgBase"/>
</dbReference>
<dbReference type="GO" id="GO:0045599">
    <property type="term" value="P:negative regulation of fat cell differentiation"/>
    <property type="evidence" value="ECO:0000250"/>
    <property type="project" value="UniProtKB"/>
</dbReference>
<dbReference type="GO" id="GO:0010629">
    <property type="term" value="P:negative regulation of gene expression"/>
    <property type="evidence" value="ECO:0000315"/>
    <property type="project" value="AgBase"/>
</dbReference>
<dbReference type="GO" id="GO:0050728">
    <property type="term" value="P:negative regulation of inflammatory response"/>
    <property type="evidence" value="ECO:0000314"/>
    <property type="project" value="UniProtKB"/>
</dbReference>
<dbReference type="GO" id="GO:0002695">
    <property type="term" value="P:negative regulation of leukocyte activation"/>
    <property type="evidence" value="ECO:0000314"/>
    <property type="project" value="UniProtKB"/>
</dbReference>
<dbReference type="GO" id="GO:0051055">
    <property type="term" value="P:negative regulation of lipid biosynthetic process"/>
    <property type="evidence" value="ECO:0000250"/>
    <property type="project" value="UniProtKB"/>
</dbReference>
<dbReference type="GO" id="GO:0051898">
    <property type="term" value="P:negative regulation of phosphatidylinositol 3-kinase/protein kinase B signal transduction"/>
    <property type="evidence" value="ECO:0000315"/>
    <property type="project" value="AgBase"/>
</dbReference>
<dbReference type="GO" id="GO:1904706">
    <property type="term" value="P:negative regulation of vascular associated smooth muscle cell proliferation"/>
    <property type="evidence" value="ECO:0000315"/>
    <property type="project" value="AgBase"/>
</dbReference>
<dbReference type="GO" id="GO:0007399">
    <property type="term" value="P:nervous system development"/>
    <property type="evidence" value="ECO:0007669"/>
    <property type="project" value="UniProtKB-KW"/>
</dbReference>
<dbReference type="GO" id="GO:0019228">
    <property type="term" value="P:neuronal action potential"/>
    <property type="evidence" value="ECO:0000250"/>
    <property type="project" value="UniProtKB"/>
</dbReference>
<dbReference type="GO" id="GO:0030264">
    <property type="term" value="P:nuclear fragmentation involved in apoptotic nuclear change"/>
    <property type="evidence" value="ECO:0000250"/>
    <property type="project" value="UniProtKB"/>
</dbReference>
<dbReference type="GO" id="GO:0030518">
    <property type="term" value="P:nuclear receptor-mediated steroid hormone signaling pathway"/>
    <property type="evidence" value="ECO:0000314"/>
    <property type="project" value="UniProtKB"/>
</dbReference>
<dbReference type="GO" id="GO:0043065">
    <property type="term" value="P:positive regulation of apoptotic process"/>
    <property type="evidence" value="ECO:0000250"/>
    <property type="project" value="UniProtKB"/>
</dbReference>
<dbReference type="GO" id="GO:2000724">
    <property type="term" value="P:positive regulation of cardiac vascular smooth muscle cell differentiation"/>
    <property type="evidence" value="ECO:0000315"/>
    <property type="project" value="AgBase"/>
</dbReference>
<dbReference type="GO" id="GO:0030335">
    <property type="term" value="P:positive regulation of cell migration"/>
    <property type="evidence" value="ECO:0000315"/>
    <property type="project" value="UniProtKB"/>
</dbReference>
<dbReference type="GO" id="GO:0008284">
    <property type="term" value="P:positive regulation of cell population proliferation"/>
    <property type="evidence" value="ECO:0000315"/>
    <property type="project" value="UniProtKB"/>
</dbReference>
<dbReference type="GO" id="GO:0007204">
    <property type="term" value="P:positive regulation of cytosolic calcium ion concentration"/>
    <property type="evidence" value="ECO:0000250"/>
    <property type="project" value="UniProtKB"/>
</dbReference>
<dbReference type="GO" id="GO:2000353">
    <property type="term" value="P:positive regulation of endothelial cell apoptotic process"/>
    <property type="evidence" value="ECO:0000250"/>
    <property type="project" value="UniProtKB"/>
</dbReference>
<dbReference type="GO" id="GO:0045742">
    <property type="term" value="P:positive regulation of epidermal growth factor receptor signaling pathway"/>
    <property type="evidence" value="ECO:0000314"/>
    <property type="project" value="UniProtKB"/>
</dbReference>
<dbReference type="GO" id="GO:0070374">
    <property type="term" value="P:positive regulation of ERK1 and ERK2 cascade"/>
    <property type="evidence" value="ECO:0000314"/>
    <property type="project" value="UniProtKB"/>
</dbReference>
<dbReference type="GO" id="GO:2001238">
    <property type="term" value="P:positive regulation of extrinsic apoptotic signaling pathway"/>
    <property type="evidence" value="ECO:0000250"/>
    <property type="project" value="UniProtKB"/>
</dbReference>
<dbReference type="GO" id="GO:0045745">
    <property type="term" value="P:positive regulation of G protein-coupled receptor signaling pathway"/>
    <property type="evidence" value="ECO:0000314"/>
    <property type="project" value="UniProtKB"/>
</dbReference>
<dbReference type="GO" id="GO:0010628">
    <property type="term" value="P:positive regulation of gene expression"/>
    <property type="evidence" value="ECO:0000315"/>
    <property type="project" value="AgBase"/>
</dbReference>
<dbReference type="GO" id="GO:0032962">
    <property type="term" value="P:positive regulation of inositol trisphosphate biosynthetic process"/>
    <property type="evidence" value="ECO:0000314"/>
    <property type="project" value="UniProtKB"/>
</dbReference>
<dbReference type="GO" id="GO:0032024">
    <property type="term" value="P:positive regulation of insulin secretion"/>
    <property type="evidence" value="ECO:0000250"/>
    <property type="project" value="UniProtKB"/>
</dbReference>
<dbReference type="GO" id="GO:0043410">
    <property type="term" value="P:positive regulation of MAPK cascade"/>
    <property type="evidence" value="ECO:0000250"/>
    <property type="project" value="UniProtKB"/>
</dbReference>
<dbReference type="GO" id="GO:0050769">
    <property type="term" value="P:positive regulation of neurogenesis"/>
    <property type="evidence" value="ECO:0000250"/>
    <property type="project" value="UniProtKB"/>
</dbReference>
<dbReference type="GO" id="GO:0001956">
    <property type="term" value="P:positive regulation of neurotransmitter secretion"/>
    <property type="evidence" value="ECO:0000250"/>
    <property type="project" value="UniProtKB"/>
</dbReference>
<dbReference type="GO" id="GO:0051897">
    <property type="term" value="P:positive regulation of phosphatidylinositol 3-kinase/protein kinase B signal transduction"/>
    <property type="evidence" value="ECO:0000314"/>
    <property type="project" value="UniProtKB"/>
</dbReference>
<dbReference type="GO" id="GO:1903078">
    <property type="term" value="P:positive regulation of protein localization to plasma membrane"/>
    <property type="evidence" value="ECO:0000314"/>
    <property type="project" value="UniProtKB"/>
</dbReference>
<dbReference type="GO" id="GO:0001934">
    <property type="term" value="P:positive regulation of protein phosphorylation"/>
    <property type="evidence" value="ECO:0000314"/>
    <property type="project" value="UniProtKB"/>
</dbReference>
<dbReference type="GO" id="GO:0090200">
    <property type="term" value="P:positive regulation of release of cytochrome c from mitochondria"/>
    <property type="evidence" value="ECO:0000250"/>
    <property type="project" value="UniProtKB"/>
</dbReference>
<dbReference type="GO" id="GO:0051281">
    <property type="term" value="P:positive regulation of release of sequestered calcium ion into cytosol"/>
    <property type="evidence" value="ECO:0000314"/>
    <property type="project" value="UniProtKB"/>
</dbReference>
<dbReference type="GO" id="GO:0045944">
    <property type="term" value="P:positive regulation of transcription by RNA polymerase II"/>
    <property type="evidence" value="ECO:0000314"/>
    <property type="project" value="UniProtKB"/>
</dbReference>
<dbReference type="GO" id="GO:0070474">
    <property type="term" value="P:positive regulation of uterine smooth muscle contraction"/>
    <property type="evidence" value="ECO:0000314"/>
    <property type="project" value="UniProtKB"/>
</dbReference>
<dbReference type="GO" id="GO:0051726">
    <property type="term" value="P:regulation of cell cycle"/>
    <property type="evidence" value="ECO:0000250"/>
    <property type="project" value="UniProtKB"/>
</dbReference>
<dbReference type="GO" id="GO:0051480">
    <property type="term" value="P:regulation of cytosolic calcium ion concentration"/>
    <property type="evidence" value="ECO:0000250"/>
    <property type="project" value="UniProtKB"/>
</dbReference>
<dbReference type="GO" id="GO:0043401">
    <property type="term" value="P:steroid hormone receptor signaling pathway"/>
    <property type="evidence" value="ECO:0000314"/>
    <property type="project" value="UniProtKB"/>
</dbReference>
<dbReference type="GO" id="GO:0042311">
    <property type="term" value="P:vasodilation"/>
    <property type="evidence" value="ECO:0000250"/>
    <property type="project" value="UniProtKB"/>
</dbReference>
<dbReference type="CDD" id="cd14989">
    <property type="entry name" value="7tmA_GPER1"/>
    <property type="match status" value="1"/>
</dbReference>
<dbReference type="FunFam" id="1.20.1070.10:FF:000093">
    <property type="entry name" value="G-protein coupled estrogen receptor 1"/>
    <property type="match status" value="1"/>
</dbReference>
<dbReference type="Gene3D" id="1.20.1070.10">
    <property type="entry name" value="Rhodopsin 7-helix transmembrane proteins"/>
    <property type="match status" value="1"/>
</dbReference>
<dbReference type="InterPro" id="IPR000276">
    <property type="entry name" value="GPCR_Rhodpsn"/>
</dbReference>
<dbReference type="InterPro" id="IPR017452">
    <property type="entry name" value="GPCR_Rhodpsn_7TM"/>
</dbReference>
<dbReference type="InterPro" id="IPR047143">
    <property type="entry name" value="GPER1-like"/>
</dbReference>
<dbReference type="PANTHER" id="PTHR24226:SF2">
    <property type="entry name" value="G-PROTEIN COUPLED ESTROGEN RECEPTOR 1"/>
    <property type="match status" value="1"/>
</dbReference>
<dbReference type="PANTHER" id="PTHR24226">
    <property type="entry name" value="G-PROTEIN COUPLED RECEPTOR 182 AND ESTROGEN RECEPTOR 1"/>
    <property type="match status" value="1"/>
</dbReference>
<dbReference type="Pfam" id="PF00001">
    <property type="entry name" value="7tm_1"/>
    <property type="match status" value="1"/>
</dbReference>
<dbReference type="PRINTS" id="PR00237">
    <property type="entry name" value="GPCRRHODOPSN"/>
</dbReference>
<dbReference type="SUPFAM" id="SSF81321">
    <property type="entry name" value="Family A G protein-coupled receptor-like"/>
    <property type="match status" value="1"/>
</dbReference>
<dbReference type="PROSITE" id="PS00237">
    <property type="entry name" value="G_PROTEIN_RECEP_F1_1"/>
    <property type="match status" value="1"/>
</dbReference>
<dbReference type="PROSITE" id="PS50262">
    <property type="entry name" value="G_PROTEIN_RECEP_F1_2"/>
    <property type="match status" value="1"/>
</dbReference>
<proteinExistence type="evidence at protein level"/>
<gene>
    <name evidence="39" type="primary">GPER1</name>
    <name type="synonym">CEPR</name>
    <name type="synonym">CMKRL2</name>
    <name type="synonym">DRY12</name>
    <name type="synonym">GPER</name>
    <name evidence="26 27" type="synonym">GPR30</name>
</gene>
<reference key="1">
    <citation type="journal article" date="1996" name="Biochem. Biophys. Res. Commun.">
        <title>Cloning of human cDNA encoding a novel heptahelix receptor expressed in Burkitt's lymphoma and widely distributed in brain and peripheral tissues.</title>
        <authorList>
            <person name="Owman C.S.O."/>
            <person name="Blay P."/>
            <person name="Nilsson C."/>
            <person name="Lolait S.J."/>
        </authorList>
    </citation>
    <scope>NUCLEOTIDE SEQUENCE [MRNA]</scope>
</reference>
<reference key="2">
    <citation type="journal article" date="1997" name="Biochem. Biophys. Res. Commun.">
        <title>Cloning of a novel member of the G protein-coupled receptor family related to peptide receptors.</title>
        <authorList>
            <person name="Feng Y."/>
            <person name="Gregor P."/>
        </authorList>
    </citation>
    <scope>NUCLEOTIDE SEQUENCE [GENOMIC DNA]</scope>
</reference>
<reference key="3">
    <citation type="journal article" date="1997" name="Biochem. Biophys. Res. Commun.">
        <title>Cloning of cDNAs encoding G protein-coupled receptor expressed in human endothelial cells exposed to fluid shear stress.</title>
        <authorList>
            <person name="Takada Y."/>
            <person name="Kato C."/>
            <person name="Kondo S."/>
            <person name="Korenaga R."/>
            <person name="Ando J."/>
        </authorList>
    </citation>
    <scope>NUCLEOTIDE SEQUENCE [MRNA]</scope>
</reference>
<reference key="4">
    <citation type="journal article" date="1997" name="FEBS Lett.">
        <title>A novel putative G-protein-coupled receptor expressed in lung, heart and lymphoid tissue.</title>
        <authorList>
            <person name="Kvingedal A.M."/>
            <person name="Smeland E.B."/>
        </authorList>
    </citation>
    <scope>NUCLEOTIDE SEQUENCE [MRNA]</scope>
</reference>
<reference key="5">
    <citation type="journal article" date="1997" name="Genomics">
        <title>Identification of a gene (GPR30) with homology to the G-protein-coupled receptor superfamily associated with estrogen receptor expression in breast cancer.</title>
        <authorList>
            <person name="Carmeci C."/>
            <person name="Thompson D.A."/>
            <person name="Ring H.Z."/>
            <person name="Francke U."/>
            <person name="Weigel R.J."/>
        </authorList>
    </citation>
    <scope>NUCLEOTIDE SEQUENCE [MRNA]</scope>
</reference>
<reference key="6">
    <citation type="journal article" date="1998" name="Genomics">
        <title>Discovery of three novel G-protein-coupled receptor genes.</title>
        <authorList>
            <person name="O'Dowd B.F."/>
            <person name="Nguyen T."/>
            <person name="Marchese A."/>
            <person name="Cheng R."/>
            <person name="Lynch K.R."/>
            <person name="Heng H.H.Q."/>
            <person name="Kolakowski L.F. Jr."/>
            <person name="George S.R."/>
        </authorList>
    </citation>
    <scope>NUCLEOTIDE SEQUENCE [GENOMIC DNA]</scope>
</reference>
<reference key="7">
    <citation type="submission" date="1996-06" db="EMBL/GenBank/DDBJ databases">
        <title>Cloning of novel IL8-related receptors from human hepatic tissue.</title>
        <authorList>
            <person name="McCoy R.L."/>
            <person name="Perlmutter D.H."/>
        </authorList>
    </citation>
    <scope>NUCLEOTIDE SEQUENCE [MRNA]</scope>
    <source>
        <tissue>Liver</tissue>
    </source>
</reference>
<reference key="8">
    <citation type="submission" date="2004-06" db="EMBL/GenBank/DDBJ databases">
        <title>Cloning of human full open reading frames in Gateway(TM) system entry vector (pDONR201).</title>
        <authorList>
            <person name="Ebert L."/>
            <person name="Schick M."/>
            <person name="Neubert P."/>
            <person name="Schatten R."/>
            <person name="Henze S."/>
            <person name="Korn B."/>
        </authorList>
    </citation>
    <scope>NUCLEOTIDE SEQUENCE [LARGE SCALE MRNA]</scope>
</reference>
<reference key="9">
    <citation type="journal article" date="2004" name="Nat. Genet.">
        <title>Complete sequencing and characterization of 21,243 full-length human cDNAs.</title>
        <authorList>
            <person name="Ota T."/>
            <person name="Suzuki Y."/>
            <person name="Nishikawa T."/>
            <person name="Otsuki T."/>
            <person name="Sugiyama T."/>
            <person name="Irie R."/>
            <person name="Wakamatsu A."/>
            <person name="Hayashi K."/>
            <person name="Sato H."/>
            <person name="Nagai K."/>
            <person name="Kimura K."/>
            <person name="Makita H."/>
            <person name="Sekine M."/>
            <person name="Obayashi M."/>
            <person name="Nishi T."/>
            <person name="Shibahara T."/>
            <person name="Tanaka T."/>
            <person name="Ishii S."/>
            <person name="Yamamoto J."/>
            <person name="Saito K."/>
            <person name="Kawai Y."/>
            <person name="Isono Y."/>
            <person name="Nakamura Y."/>
            <person name="Nagahari K."/>
            <person name="Murakami K."/>
            <person name="Yasuda T."/>
            <person name="Iwayanagi T."/>
            <person name="Wagatsuma M."/>
            <person name="Shiratori A."/>
            <person name="Sudo H."/>
            <person name="Hosoiri T."/>
            <person name="Kaku Y."/>
            <person name="Kodaira H."/>
            <person name="Kondo H."/>
            <person name="Sugawara M."/>
            <person name="Takahashi M."/>
            <person name="Kanda K."/>
            <person name="Yokoi T."/>
            <person name="Furuya T."/>
            <person name="Kikkawa E."/>
            <person name="Omura Y."/>
            <person name="Abe K."/>
            <person name="Kamihara K."/>
            <person name="Katsuta N."/>
            <person name="Sato K."/>
            <person name="Tanikawa M."/>
            <person name="Yamazaki M."/>
            <person name="Ninomiya K."/>
            <person name="Ishibashi T."/>
            <person name="Yamashita H."/>
            <person name="Murakawa K."/>
            <person name="Fujimori K."/>
            <person name="Tanai H."/>
            <person name="Kimata M."/>
            <person name="Watanabe M."/>
            <person name="Hiraoka S."/>
            <person name="Chiba Y."/>
            <person name="Ishida S."/>
            <person name="Ono Y."/>
            <person name="Takiguchi S."/>
            <person name="Watanabe S."/>
            <person name="Yosida M."/>
            <person name="Hotuta T."/>
            <person name="Kusano J."/>
            <person name="Kanehori K."/>
            <person name="Takahashi-Fujii A."/>
            <person name="Hara H."/>
            <person name="Tanase T.-O."/>
            <person name="Nomura Y."/>
            <person name="Togiya S."/>
            <person name="Komai F."/>
            <person name="Hara R."/>
            <person name="Takeuchi K."/>
            <person name="Arita M."/>
            <person name="Imose N."/>
            <person name="Musashino K."/>
            <person name="Yuuki H."/>
            <person name="Oshima A."/>
            <person name="Sasaki N."/>
            <person name="Aotsuka S."/>
            <person name="Yoshikawa Y."/>
            <person name="Matsunawa H."/>
            <person name="Ichihara T."/>
            <person name="Shiohata N."/>
            <person name="Sano S."/>
            <person name="Moriya S."/>
            <person name="Momiyama H."/>
            <person name="Satoh N."/>
            <person name="Takami S."/>
            <person name="Terashima Y."/>
            <person name="Suzuki O."/>
            <person name="Nakagawa S."/>
            <person name="Senoh A."/>
            <person name="Mizoguchi H."/>
            <person name="Goto Y."/>
            <person name="Shimizu F."/>
            <person name="Wakebe H."/>
            <person name="Hishigaki H."/>
            <person name="Watanabe T."/>
            <person name="Sugiyama A."/>
            <person name="Takemoto M."/>
            <person name="Kawakami B."/>
            <person name="Yamazaki M."/>
            <person name="Watanabe K."/>
            <person name="Kumagai A."/>
            <person name="Itakura S."/>
            <person name="Fukuzumi Y."/>
            <person name="Fujimori Y."/>
            <person name="Komiyama M."/>
            <person name="Tashiro H."/>
            <person name="Tanigami A."/>
            <person name="Fujiwara T."/>
            <person name="Ono T."/>
            <person name="Yamada K."/>
            <person name="Fujii Y."/>
            <person name="Ozaki K."/>
            <person name="Hirao M."/>
            <person name="Ohmori Y."/>
            <person name="Kawabata A."/>
            <person name="Hikiji T."/>
            <person name="Kobatake N."/>
            <person name="Inagaki H."/>
            <person name="Ikema Y."/>
            <person name="Okamoto S."/>
            <person name="Okitani R."/>
            <person name="Kawakami T."/>
            <person name="Noguchi S."/>
            <person name="Itoh T."/>
            <person name="Shigeta K."/>
            <person name="Senba T."/>
            <person name="Matsumura K."/>
            <person name="Nakajima Y."/>
            <person name="Mizuno T."/>
            <person name="Morinaga M."/>
            <person name="Sasaki M."/>
            <person name="Togashi T."/>
            <person name="Oyama M."/>
            <person name="Hata H."/>
            <person name="Watanabe M."/>
            <person name="Komatsu T."/>
            <person name="Mizushima-Sugano J."/>
            <person name="Satoh T."/>
            <person name="Shirai Y."/>
            <person name="Takahashi Y."/>
            <person name="Nakagawa K."/>
            <person name="Okumura K."/>
            <person name="Nagase T."/>
            <person name="Nomura N."/>
            <person name="Kikuchi H."/>
            <person name="Masuho Y."/>
            <person name="Yamashita R."/>
            <person name="Nakai K."/>
            <person name="Yada T."/>
            <person name="Nakamura Y."/>
            <person name="Ohara O."/>
            <person name="Isogai T."/>
            <person name="Sugano S."/>
        </authorList>
    </citation>
    <scope>NUCLEOTIDE SEQUENCE [LARGE SCALE MRNA]</scope>
    <source>
        <tissue>Placenta</tissue>
    </source>
</reference>
<reference key="10">
    <citation type="journal article" date="2008" name="Nat. Methods">
        <title>Human protein factory for converting the transcriptome into an in vitro-expressed proteome.</title>
        <authorList>
            <person name="Goshima N."/>
            <person name="Kawamura Y."/>
            <person name="Fukumoto A."/>
            <person name="Miura A."/>
            <person name="Honma R."/>
            <person name="Satoh R."/>
            <person name="Wakamatsu A."/>
            <person name="Yamamoto J."/>
            <person name="Kimura K."/>
            <person name="Nishikawa T."/>
            <person name="Andoh T."/>
            <person name="Iida Y."/>
            <person name="Ishikawa K."/>
            <person name="Ito E."/>
            <person name="Kagawa N."/>
            <person name="Kaminaga C."/>
            <person name="Kanehori K."/>
            <person name="Kawakami B."/>
            <person name="Kenmochi K."/>
            <person name="Kimura R."/>
            <person name="Kobayashi M."/>
            <person name="Kuroita T."/>
            <person name="Kuwayama H."/>
            <person name="Maruyama Y."/>
            <person name="Matsuo K."/>
            <person name="Minami K."/>
            <person name="Mitsubori M."/>
            <person name="Mori M."/>
            <person name="Morishita R."/>
            <person name="Murase A."/>
            <person name="Nishikawa A."/>
            <person name="Nishikawa S."/>
            <person name="Okamoto T."/>
            <person name="Sakagami N."/>
            <person name="Sakamoto Y."/>
            <person name="Sasaki Y."/>
            <person name="Seki T."/>
            <person name="Sono S."/>
            <person name="Sugiyama A."/>
            <person name="Sumiya T."/>
            <person name="Takayama T."/>
            <person name="Takayama Y."/>
            <person name="Takeda H."/>
            <person name="Togashi T."/>
            <person name="Yahata K."/>
            <person name="Yamada H."/>
            <person name="Yanagisawa Y."/>
            <person name="Endo Y."/>
            <person name="Imamoto F."/>
            <person name="Kisu Y."/>
            <person name="Tanaka S."/>
            <person name="Isogai T."/>
            <person name="Imai J."/>
            <person name="Watanabe S."/>
            <person name="Nomura N."/>
        </authorList>
    </citation>
    <scope>NUCLEOTIDE SEQUENCE [LARGE SCALE MRNA]</scope>
    <scope>VARIANT LEU-16</scope>
</reference>
<reference key="11">
    <citation type="journal article" date="2003" name="Science">
        <title>Human chromosome 7: DNA sequence and biology.</title>
        <authorList>
            <person name="Scherer S.W."/>
            <person name="Cheung J."/>
            <person name="MacDonald J.R."/>
            <person name="Osborne L.R."/>
            <person name="Nakabayashi K."/>
            <person name="Herbrick J.-A."/>
            <person name="Carson A.R."/>
            <person name="Parker-Katiraee L."/>
            <person name="Skaug J."/>
            <person name="Khaja R."/>
            <person name="Zhang J."/>
            <person name="Hudek A.K."/>
            <person name="Li M."/>
            <person name="Haddad M."/>
            <person name="Duggan G.E."/>
            <person name="Fernandez B.A."/>
            <person name="Kanematsu E."/>
            <person name="Gentles S."/>
            <person name="Christopoulos C.C."/>
            <person name="Choufani S."/>
            <person name="Kwasnicka D."/>
            <person name="Zheng X.H."/>
            <person name="Lai Z."/>
            <person name="Nusskern D.R."/>
            <person name="Zhang Q."/>
            <person name="Gu Z."/>
            <person name="Lu F."/>
            <person name="Zeesman S."/>
            <person name="Nowaczyk M.J."/>
            <person name="Teshima I."/>
            <person name="Chitayat D."/>
            <person name="Shuman C."/>
            <person name="Weksberg R."/>
            <person name="Zackai E.H."/>
            <person name="Grebe T.A."/>
            <person name="Cox S.R."/>
            <person name="Kirkpatrick S.J."/>
            <person name="Rahman N."/>
            <person name="Friedman J.M."/>
            <person name="Heng H.H.Q."/>
            <person name="Pelicci P.G."/>
            <person name="Lo-Coco F."/>
            <person name="Belloni E."/>
            <person name="Shaffer L.G."/>
            <person name="Pober B."/>
            <person name="Morton C.C."/>
            <person name="Gusella J.F."/>
            <person name="Bruns G.A.P."/>
            <person name="Korf B.R."/>
            <person name="Quade B.J."/>
            <person name="Ligon A.H."/>
            <person name="Ferguson H."/>
            <person name="Higgins A.W."/>
            <person name="Leach N.T."/>
            <person name="Herrick S.R."/>
            <person name="Lemyre E."/>
            <person name="Farra C.G."/>
            <person name="Kim H.-G."/>
            <person name="Summers A.M."/>
            <person name="Gripp K.W."/>
            <person name="Roberts W."/>
            <person name="Szatmari P."/>
            <person name="Winsor E.J.T."/>
            <person name="Grzeschik K.-H."/>
            <person name="Teebi A."/>
            <person name="Minassian B.A."/>
            <person name="Kere J."/>
            <person name="Armengol L."/>
            <person name="Pujana M.A."/>
            <person name="Estivill X."/>
            <person name="Wilson M.D."/>
            <person name="Koop B.F."/>
            <person name="Tosi S."/>
            <person name="Moore G.E."/>
            <person name="Boright A.P."/>
            <person name="Zlotorynski E."/>
            <person name="Kerem B."/>
            <person name="Kroisel P.M."/>
            <person name="Petek E."/>
            <person name="Oscier D.G."/>
            <person name="Mould S.J."/>
            <person name="Doehner H."/>
            <person name="Doehner K."/>
            <person name="Rommens J.M."/>
            <person name="Vincent J.B."/>
            <person name="Venter J.C."/>
            <person name="Li P.W."/>
            <person name="Mural R.J."/>
            <person name="Adams M.D."/>
            <person name="Tsui L.-C."/>
        </authorList>
    </citation>
    <scope>NUCLEOTIDE SEQUENCE [LARGE SCALE GENOMIC DNA]</scope>
</reference>
<reference key="12">
    <citation type="submission" date="2005-07" db="EMBL/GenBank/DDBJ databases">
        <authorList>
            <person name="Mural R.J."/>
            <person name="Istrail S."/>
            <person name="Sutton G.G."/>
            <person name="Florea L."/>
            <person name="Halpern A.L."/>
            <person name="Mobarry C.M."/>
            <person name="Lippert R."/>
            <person name="Walenz B."/>
            <person name="Shatkay H."/>
            <person name="Dew I."/>
            <person name="Miller J.R."/>
            <person name="Flanigan M.J."/>
            <person name="Edwards N.J."/>
            <person name="Bolanos R."/>
            <person name="Fasulo D."/>
            <person name="Halldorsson B.V."/>
            <person name="Hannenhalli S."/>
            <person name="Turner R."/>
            <person name="Yooseph S."/>
            <person name="Lu F."/>
            <person name="Nusskern D.R."/>
            <person name="Shue B.C."/>
            <person name="Zheng X.H."/>
            <person name="Zhong F."/>
            <person name="Delcher A.L."/>
            <person name="Huson D.H."/>
            <person name="Kravitz S.A."/>
            <person name="Mouchard L."/>
            <person name="Reinert K."/>
            <person name="Remington K.A."/>
            <person name="Clark A.G."/>
            <person name="Waterman M.S."/>
            <person name="Eichler E.E."/>
            <person name="Adams M.D."/>
            <person name="Hunkapiller M.W."/>
            <person name="Myers E.W."/>
            <person name="Venter J.C."/>
        </authorList>
    </citation>
    <scope>NUCLEOTIDE SEQUENCE [LARGE SCALE GENOMIC DNA]</scope>
</reference>
<reference key="13">
    <citation type="journal article" date="2004" name="Genome Res.">
        <title>The status, quality, and expansion of the NIH full-length cDNA project: the Mammalian Gene Collection (MGC).</title>
        <authorList>
            <consortium name="The MGC Project Team"/>
        </authorList>
    </citation>
    <scope>NUCLEOTIDE SEQUENCE [LARGE SCALE MRNA]</scope>
    <scope>VARIANT LEU-16</scope>
    <source>
        <tissue>Uterus</tissue>
    </source>
</reference>
<reference key="14">
    <citation type="journal article" date="2000" name="Mol. Endocrinol.">
        <title>Estrogen-induced activation of Erk-1 and Erk-2 requires the G protein-coupled receptor homolog, GPR30, and occurs via trans-activation of the epidermal growth factor receptor through release of HB-EGF.</title>
        <authorList>
            <person name="Filardo E.J."/>
            <person name="Quinn J.A."/>
            <person name="Bland K.I."/>
            <person name="Frackelton A.R. Jr."/>
        </authorList>
    </citation>
    <scope>FUNCTION</scope>
</reference>
<reference key="15">
    <citation type="journal article" date="2002" name="Eur. J. Biochem.">
        <title>Progestin upregulates G-protein-coupled receptor 30 in breast cancer cells.</title>
        <authorList>
            <person name="Ahola T.M."/>
            <person name="Purmonen S."/>
            <person name="Pennanen P."/>
            <person name="Zhuang Y.H."/>
            <person name="Tuohimaa P."/>
            <person name="Ylikomi T."/>
        </authorList>
    </citation>
    <scope>INDUCTION</scope>
</reference>
<reference key="16">
    <citation type="journal article" date="2005" name="Endocrinology">
        <title>Identity of an estrogen membrane receptor coupled to a G protein in human breast cancer cells.</title>
        <authorList>
            <person name="Thomas P."/>
            <person name="Pang Y."/>
            <person name="Filardo E.J."/>
            <person name="Dong J."/>
        </authorList>
    </citation>
    <scope>FUNCTION</scope>
    <scope>ESTROGEN-BINDING</scope>
    <scope>BIOPHYSICOCHEMICAL PROPERTIES</scope>
    <scope>SUBCELLULAR LOCATION</scope>
</reference>
<reference key="17">
    <citation type="journal article" date="2005" name="Science">
        <title>A transmembrane intracellular estrogen receptor mediates rapid cell signaling.</title>
        <authorList>
            <person name="Revankar C.M."/>
            <person name="Cimino D.F."/>
            <person name="Sklar L.A."/>
            <person name="Arterburn J.B."/>
            <person name="Prossnitz E.R."/>
        </authorList>
    </citation>
    <scope>FUNCTION</scope>
    <scope>ESTROGEN-BINDING</scope>
    <scope>BIOPHYSICOCHEMICAL PROPERTIES</scope>
    <scope>SUBCELLULAR LOCATION</scope>
</reference>
<reference key="18">
    <citation type="journal article" date="2006" name="Mol. Endocrinol.">
        <title>Nature of functional estrogen receptors at the plasma membrane.</title>
        <authorList>
            <person name="Pedram A."/>
            <person name="Razandi M."/>
            <person name="Levin E.R."/>
        </authorList>
    </citation>
    <scope>ABSENCE OF ESTROGEN-BINDING</scope>
    <scope>SUBCELLULAR LOCATION</scope>
</reference>
<reference key="19">
    <citation type="journal article" date="2007" name="Endocrinology">
        <title>Activation of the novel estrogen receptor G protein-coupled receptor 30 (GPR30) at the plasma membrane.</title>
        <authorList>
            <person name="Filardo E."/>
            <person name="Quinn J."/>
            <person name="Pang Y."/>
            <person name="Graeber C."/>
            <person name="Shaw S."/>
            <person name="Dong J."/>
            <person name="Thomas P."/>
        </authorList>
    </citation>
    <scope>SUBCELLULAR LOCATION</scope>
</reference>
<reference key="20">
    <citation type="journal article" date="2008" name="Endocrinology">
        <title>G protein-coupled receptor 30 localizes to the endoplasmic reticulum and is not activated by estradiol.</title>
        <authorList>
            <person name="Otto C."/>
            <person name="Rohde-Schulz B."/>
            <person name="Schwarz G."/>
            <person name="Fuchs I."/>
            <person name="Klewer M."/>
            <person name="Brittain D."/>
            <person name="Langer G."/>
            <person name="Bader B."/>
            <person name="Prelle K."/>
            <person name="Nubbemeyer R."/>
            <person name="Fritzemeier K.H."/>
        </authorList>
    </citation>
    <scope>ABSENCE OF ESTROGEN-BINDING</scope>
    <scope>SUBCELLULAR LOCATION</scope>
</reference>
<reference key="21">
    <citation type="journal article" date="2009" name="Circ. Res.">
        <title>Regulatory role of G protein-coupled estrogen receptor for vascular function and obesity.</title>
        <authorList>
            <person name="Haas E."/>
            <person name="Bhattacharya I."/>
            <person name="Brailoiu E."/>
            <person name="Damjanovic M."/>
            <person name="Brailoiu G.C."/>
            <person name="Gao X."/>
            <person name="Mueller-Guerre L."/>
            <person name="Marjon N.A."/>
            <person name="Gut A."/>
            <person name="Minotti R."/>
            <person name="Meyer M.R."/>
            <person name="Amann K."/>
            <person name="Ammann E."/>
            <person name="Perez-Dominguez A."/>
            <person name="Genoni M."/>
            <person name="Clegg D.J."/>
            <person name="Dun N.J."/>
            <person name="Resta T.C."/>
            <person name="Prossnitz E.R."/>
            <person name="Barton M."/>
        </authorList>
    </citation>
    <scope>FUNCTION</scope>
</reference>
<reference key="22">
    <citation type="journal article" date="2009" name="Mol. Endocrinol.">
        <title>Coordinate regulation of estrogen-mediated fibronectin matrix assembly and epidermal growth factor receptor transactivation by the G protein-coupled receptor, GPR30.</title>
        <authorList>
            <person name="Quinn J.A."/>
            <person name="Graeber C.T."/>
            <person name="Frackelton A.R. Jr."/>
            <person name="Kim M."/>
            <person name="Schwarzbauer J.E."/>
            <person name="Filardo E.J."/>
        </authorList>
    </citation>
    <scope>FUNCTION</scope>
</reference>
<reference key="23">
    <citation type="journal article" date="2009" name="Mol. Endocrinol.">
        <title>G protein-coupled receptor 30 expression is up-regulated by EGF and TGF alpha in estrogen receptor alpha-positive cancer cells.</title>
        <authorList>
            <person name="Vivacqua A."/>
            <person name="Lappano R."/>
            <person name="De Marco P."/>
            <person name="Sisci D."/>
            <person name="Aquila S."/>
            <person name="De Amicis F."/>
            <person name="Fuqua S.A."/>
            <person name="Ando S."/>
            <person name="Maggiolini M."/>
        </authorList>
    </citation>
    <scope>INTERACTION WITH EGFR AND ESR1</scope>
    <scope>INDUCTION</scope>
</reference>
<reference key="24">
    <citation type="journal article" date="2010" name="Cancer Res.">
        <title>Nuclear alternate estrogen receptor GPR30 mediates 17beta-estradiol-induced gene expression and migration in breast cancer-associated fibroblasts.</title>
        <authorList>
            <person name="Madeo A."/>
            <person name="Maggiolini M."/>
        </authorList>
    </citation>
    <scope>FUNCTION</scope>
    <scope>INTERACTION WITH EGFR</scope>
    <scope>ASSOCIATION WITH CHROMATIN</scope>
    <scope>SUBCELLULAR LOCATION</scope>
    <scope>TISSUE SPECIFICITY</scope>
</reference>
<reference key="25">
    <citation type="journal article" date="2010" name="Cell Death Differ.">
        <title>Activation of GPR30 inhibits the growth of prostate cancer cells through sustained activation of Erk1/2, c-jun/c-fos-dependent upregulation of p21, and induction of G(2) cell-cycle arrest.</title>
        <authorList>
            <person name="Chan Q.K."/>
            <person name="Lam H.M."/>
            <person name="Ng C.F."/>
            <person name="Lee A.Y."/>
            <person name="Chan E.S."/>
            <person name="Ng H.K."/>
            <person name="Ho S.M."/>
            <person name="Lau K.M."/>
        </authorList>
    </citation>
    <scope>FUNCTION</scope>
    <scope>TISSUE SPECIFICITY</scope>
</reference>
<reference key="26">
    <citation type="journal article" date="2010" name="Steroids">
        <title>Conserved estrogen binding and signaling functions of the G protein-coupled estrogen receptor 1 (GPER) in mammals and fish.</title>
        <authorList>
            <person name="Thomas P."/>
            <person name="Alyea R."/>
            <person name="Pang Y."/>
            <person name="Peyton C."/>
            <person name="Dong J."/>
            <person name="Berg A.H."/>
        </authorList>
    </citation>
    <scope>ESTROGEN-BINDING</scope>
    <scope>BIOPHYSICOCHEMICAL PROPERTIES</scope>
</reference>
<reference key="27">
    <citation type="journal article" date="2011" name="Endocrinology">
        <title>G-1-activated membrane estrogen receptors mediate increased contractility of the human myometrium.</title>
        <authorList>
            <person name="Maiti K."/>
            <person name="Paul J.W."/>
            <person name="Read M."/>
            <person name="Chan E.C."/>
            <person name="Riley S.C."/>
            <person name="Nahar P."/>
            <person name="Smith R."/>
        </authorList>
    </citation>
    <scope>FUNCTION</scope>
    <scope>SUBCELLULAR LOCATION</scope>
    <scope>GLYCOSYLATION</scope>
    <scope>TISSUE SPECIFICITY</scope>
</reference>
<reference key="28">
    <citation type="journal article" date="2011" name="Hypertension">
        <title>GPR30 expression is required for the mineralocorticoid receptor-independent rapid vascular effects of aldosterone.</title>
        <authorList>
            <person name="Gros R."/>
            <person name="Ding Q."/>
            <person name="Sklar L.A."/>
            <person name="Prossnitz E.E."/>
            <person name="Arterburn J.B."/>
            <person name="Chorazyczewski J."/>
            <person name="Feldman R.D."/>
        </authorList>
    </citation>
    <scope>ALDOSTERONE-BINDING</scope>
    <scope>FUNCTION</scope>
</reference>
<reference key="29">
    <citation type="journal article" date="2011" name="J. Biol. Chem.">
        <title>Down-modulation of the G-protein-coupled estrogen receptor, GPER, from the cell surface occurs via a trans-Golgi-proteasome pathway.</title>
        <authorList>
            <person name="Cheng S.B."/>
            <person name="Quinn J.A."/>
            <person name="Graeber C.T."/>
            <person name="Filardo E.J."/>
        </authorList>
    </citation>
    <scope>SUBCELLULAR LOCATION</scope>
    <scope>UBIQUITINATION</scope>
</reference>
<reference key="30">
    <citation type="journal article" date="2011" name="Mol. Pharmacol.">
        <title>G protein-coupled estrogen receptor 1/G protein-coupled receptor 30 localizes in the plasma membrane and traffics intracellularly on cytokeratin intermediate filaments.</title>
        <authorList>
            <person name="Sanden C."/>
            <person name="Broselid S."/>
            <person name="Cornmark L."/>
            <person name="Andersson K."/>
            <person name="Daszkiewicz-Nilsson J."/>
            <person name="Martensson U.E."/>
            <person name="Olde B."/>
            <person name="Leeb-Lundberg L.M."/>
        </authorList>
    </citation>
    <scope>FUNCTION</scope>
    <scope>INTERACTION WITH KRT7 AND KRT8</scope>
    <scope>SUBCELLULAR LOCATION</scope>
    <scope>TISSUE SPECIFICITY</scope>
</reference>
<reference key="31">
    <citation type="journal article" date="2011" name="Steroids">
        <title>Retrograde transport of the transmembrane estrogen receptor, G-protein-coupled-receptor-30 (GPR30/GPER) from the plasma membrane towards the nucleus.</title>
        <authorList>
            <person name="Cheng S.B."/>
            <person name="Graeber C.T."/>
            <person name="Quinn J.A."/>
            <person name="Filardo E.J."/>
        </authorList>
    </citation>
    <scope>SUBCELLULAR LOCATION</scope>
    <scope>TISSUE SPECIFICITY</scope>
</reference>
<reference key="32">
    <citation type="journal article" date="2012" name="J. Biol. Chem.">
        <title>G protein-coupled estrogen receptor mediates the up-regulation of fatty acid synthase induced by 17beta-estradiol in cancer cells and cancer-associated fibroblasts.</title>
        <authorList>
            <person name="Santolla M.F."/>
            <person name="Lappano R."/>
            <person name="De Marco P."/>
            <person name="Pupo M."/>
            <person name="Vivacqua A."/>
            <person name="Sisci D."/>
            <person name="Abonante S."/>
            <person name="Iacopetta D."/>
            <person name="Cappello A.R."/>
            <person name="Dolce V."/>
            <person name="Maggiolini M."/>
        </authorList>
    </citation>
    <scope>FUNCTION</scope>
</reference>
<reference key="33">
    <citation type="journal article" date="2012" name="PLoS ONE">
        <title>G-protein coupled receptor 30 (GPR30): a novel regulator of endothelial inflammation.</title>
        <authorList>
            <person name="Chakrabarti S."/>
            <person name="Davidge S.T."/>
        </authorList>
    </citation>
    <scope>FUNCTION</scope>
    <scope>SUBCELLULAR LOCATION</scope>
    <scope>TISSUE SPECIFICITY</scope>
</reference>
<reference key="34">
    <citation type="journal article" date="2012" name="Proc. Natl. Acad. Sci. U.S.A.">
        <title>N-terminal acetylome analyses and functional insights of the N-terminal acetyltransferase NatB.</title>
        <authorList>
            <person name="Van Damme P."/>
            <person name="Lasa M."/>
            <person name="Polevoda B."/>
            <person name="Gazquez C."/>
            <person name="Elosegui-Artola A."/>
            <person name="Kim D.S."/>
            <person name="De Juan-Pardo E."/>
            <person name="Demeyer K."/>
            <person name="Hole K."/>
            <person name="Larrea E."/>
            <person name="Timmerman E."/>
            <person name="Prieto J."/>
            <person name="Arnesen T."/>
            <person name="Sherman F."/>
            <person name="Gevaert K."/>
            <person name="Aldabe R."/>
        </authorList>
    </citation>
    <scope>ACETYLATION [LARGE SCALE ANALYSIS] AT MET-1</scope>
    <scope>IDENTIFICATION BY MASS SPECTROMETRY [LARGE SCALE ANALYSIS]</scope>
</reference>
<reference key="35">
    <citation type="journal article" date="2013" name="Am. J. Physiol.">
        <title>Aldosterone mediates its rapid effects in vascular endothelial cells through GPER activation.</title>
        <authorList>
            <person name="Gros R."/>
            <person name="Ding Q."/>
            <person name="Liu B."/>
            <person name="Chorazyczewski J."/>
            <person name="Feldman R.D."/>
        </authorList>
    </citation>
    <scope>ALDOSTERONE-BINDING</scope>
    <scope>FUNCTION</scope>
</reference>
<reference key="36">
    <citation type="journal article" date="2013" name="J. Mol. Endocrinol.">
        <title>G-protein-coupled receptor 30 interacts with receptor activity-modifying protein 3 and confers sex-dependent cardioprotection.</title>
        <authorList>
            <person name="Lenhart P.M."/>
            <person name="Broselid S."/>
            <person name="Barrick C.J."/>
            <person name="Leeb-Lundberg L.M."/>
            <person name="Caron K.M."/>
        </authorList>
    </citation>
    <scope>FUNCTION</scope>
    <scope>INTERACTION WITH RAMP3</scope>
    <scope>SUBCELLULAR LOCATION</scope>
</reference>
<reference key="37">
    <citation type="journal article" date="2012" name="Steroids">
        <title>Position paper: The membrane estrogen receptor GPER--Clues and questions.</title>
        <authorList>
            <person name="Barton M."/>
        </authorList>
    </citation>
    <scope>REVIEW</scope>
</reference>
<reference key="38">
    <citation type="journal article" date="2012" name="Endocrinology">
        <title>Minireview: G protein-coupled estrogen receptor-1, GPER-1: its mechanism of action and role in female reproductive cancer, renal and vascular physiology.</title>
        <authorList>
            <person name="Filardo E.J."/>
            <person name="Thomas P."/>
        </authorList>
    </citation>
    <scope>REVIEW</scope>
</reference>
<name>GPER1_HUMAN</name>
<sequence>MDVTSQARGVGLEMYPGTAQPAAPNTTSPELNLSHPLLGTALANGTGELSEHQQYVIGLFLSCLYTIFLFPIGFVGNILILVVNISFREKMTIPDLYFINLAVADLILVADSLIEVFNLHERYYDIAVLCTFMSLFLQVNMYSSVFFLTWMSFDRYIALARAMRCSLFRTKHHARLSCGLIWMASVSATLVPFTAVHLQHTDEACFCFADVREVQWLEVTLGFIVPFAIIGLCYSLIVRVLVRAHRHRGLRPRRQKALRMILAVVLVFFVCWLPENVFISVHLLQRTQPGAAPCKQSFRHAHPLTGHIVNLAAFSNSCLNPLIYSFLGETFRDKLRLYIEQKTNLPALNRFCHAALKAVIPDSTEQSDVRFSSAV</sequence>
<comment type="function">
    <text evidence="4 7 8 11 12 15 16 17 18 20 22 23 24 25">G-protein coupled estrogen receptor that binds to 17-beta-estradiol (E2) with high affinity, leading to rapid and transient activation of numerous intracellular signaling pathways. Stimulates cAMP production, calcium mobilization and tyrosine kinase Src inducing the release of heparin-bound epidermal growth factor (HB-EGF) and subsequent transactivation of the epidermal growth factor receptor (EGFR), activating downstream signaling pathways such as PI3K/Akt and ERK/MAPK. Mediates pleiotropic functions among others in the cardiovascular, endocrine, reproductive, immune and central nervous systems. Has a role in cardioprotection by reducing cardiac hypertrophy and perivascular fibrosis in a RAMP3-dependent manner. Regulates arterial blood pressure by stimulating vasodilation and reducing vascular smooth muscle and microvascular endothelial cell proliferation. Plays a role in blood glucose homeostasis contributing to the insulin secretion response by pancreatic beta cells. Triggers mitochondrial apoptosis during pachytene spermatocyte differentiation. Stimulates uterine epithelial cell proliferation. Enhances uterine contractility in response to oxytocin. Contributes to thymic atrophy by inducing apoptosis. Attenuates TNF-mediated endothelial expression of leukocyte adhesion molecules. Promotes neuritogenesis in developing hippocampal neurons. Plays a role in acute neuroprotection against NMDA-induced excitotoxic neuronal death. Increases firing activity and intracellular calcium oscillations in luteinizing hormone-releasing hormone (LHRH) neurons. Inhibits early osteoblast proliferation at growth plate during skeletal development. Inhibits mature adipocyte differentiation and lipid accumulation. Involved in the recruitment of beta-arrestin 2 ARRB2 at the plasma membrane in epithelial cells. Also functions as a receptor for aldosterone mediating rapid regulation of vascular contractibility through the PI3K/ERK signaling pathway. Involved in cancer progression regulation. Stimulates cancer-associated fibroblast (CAF) proliferation by a rapid genomic response through the EGFR/ERK transduction pathway. Associated with EGFR, may act as a transcription factor activating growth regulatory genes (c-fos, cyclin D1). Promotes integrin alpha-5/beta-1 and fibronectin (FN) matrix assembly in breast cancer cells.</text>
</comment>
<comment type="biophysicochemical properties">
    <kinetics>
        <text evidence="7 8 14">Binds 17-beta-estradiol (E2) in plasma membranes with high affinity (Kd is 3.3 nM) and displays rapid kinetics of association and dissociation.</text>
    </kinetics>
</comment>
<comment type="subunit">
    <text evidence="1 13 16 17 25 28">Homodimer (Probable). Heterodimer; heterodimerizes with other G-protein-coupled receptor (GPCRs) like CRHR1, HTR1A and PAQR8. Interacts (via C-terminus tail motif) with DLG4 (via N-terminus tandem pair of PDZ domains); the interaction is direct and induces the increase of GPER1 protein levels residing at the plasma membrane surface in a estradiol-independent manner (By similarity). Interacts with RAMP3; the interaction confers proper subcellular localization and function in cardioprotection. Interacts with KRT7 and KRT8. Interacts with EGFR; the interaction increases after agonist-induced stimulation in cancer-associated fibroblasts (CAF). Interacts with EGFR and ESR1.</text>
</comment>
<comment type="subcellular location">
    <subcellularLocation>
        <location>Nucleus</location>
    </subcellularLocation>
    <subcellularLocation>
        <location evidence="1">Cytoplasm</location>
    </subcellularLocation>
    <subcellularLocation>
        <location>Cytoplasm</location>
        <location>Perinuclear region</location>
    </subcellularLocation>
    <subcellularLocation>
        <location>Cytoplasm</location>
        <location>Cytoskeleton</location>
    </subcellularLocation>
    <subcellularLocation>
        <location>Cell membrane</location>
        <topology>Multi-pass membrane protein</topology>
    </subcellularLocation>
    <subcellularLocation>
        <location>Basolateral cell membrane</location>
        <topology>Multi-pass membrane protein</topology>
    </subcellularLocation>
    <subcellularLocation>
        <location>Cytoplasmic vesicle membrane</location>
        <topology>Multi-pass membrane protein</topology>
    </subcellularLocation>
    <subcellularLocation>
        <location>Early endosome</location>
    </subcellularLocation>
    <subcellularLocation>
        <location>Recycling endosome</location>
    </subcellularLocation>
    <subcellularLocation>
        <location evidence="1">Golgi apparatus membrane</location>
        <topology evidence="1">Multi-pass membrane protein</topology>
    </subcellularLocation>
    <subcellularLocation>
        <location>Golgi apparatus</location>
        <location>trans-Golgi network</location>
    </subcellularLocation>
    <subcellularLocation>
        <location evidence="9">Endoplasmic reticulum membrane</location>
        <topology>Multi-pass membrane protein</topology>
    </subcellularLocation>
    <subcellularLocation>
        <location evidence="1">Cell projection</location>
        <location evidence="1">Dendrite</location>
    </subcellularLocation>
    <subcellularLocation>
        <location evidence="1">Cell projection</location>
        <location evidence="1">Dendritic spine membrane</location>
        <topology evidence="1">Multi-pass membrane protein</topology>
    </subcellularLocation>
    <subcellularLocation>
        <location evidence="1">Cell projection</location>
        <location evidence="1">Axon</location>
    </subcellularLocation>
    <subcellularLocation>
        <location evidence="1">Postsynaptic density</location>
    </subcellularLocation>
    <subcellularLocation>
        <location evidence="1">Mitochondrion membrane</location>
        <topology evidence="1">Multi-pass membrane protein</topology>
    </subcellularLocation>
    <text evidence="1">Colocalized with BSN to the active zone of presynaptic density. Colocalized with DLG4/PSD95 and neurabin-2 PPP1R9B in neuronal synaptosomes (By similarity). Endocytosed in a agonist- and arrestin-independent manner. Colocalized with RAMP3 and clathrin-coated pits at the plasma membrane. Colocalized with transferrin receptor at the plasma membrane and perinuclear region. Accumulated and colocalized with RAB11 proteins in recycling endosomes and trans-Golgi network (TGN), but does neither recycle back to the cell surface nor traffics to late endosome or lysosome. Colocalized with calnexin in the endoplasmic reticulum. Traffics to intracellular sites via cytokeratin intermediate filaments like KRT7 and KRT8 after constitutive endocytosis in epithelial cells. Colocalized with EGFR in the nucleus of agonist-induced cancer-associated fibroblasts (CAF).</text>
</comment>
<comment type="tissue specificity">
    <text evidence="15 16 17 19 20 24">Expressed in placenta, endothelial and epithelial cells, non laboring and laboring term myometrium, fibroblasts and cancer-associated fibroblasts (CAF), prostate cancer cells and invasive adenocarcinoma (at protein level). Ubiquitously expressed, but is most abundant in placenta. In brain regions, expressed as a 2.8 kb transcript in basal forebrain, frontal cortex, thalamus, hippocampus, caudate and putamen.</text>
</comment>
<comment type="induction">
    <text evidence="5 13">Up-regulated by EGF and TGF-alpha in endometrial, ovarian and breast tumor cells. Up-regulated by progestin and by phorbol 12-myristate 13-acetate (PMA) in breast cancer cell lines.</text>
</comment>
<comment type="PTM">
    <text evidence="21">Ubiquitinated; ubiquitination occurs at the plasma membrane and leads to proteasome-mediated degradation.</text>
</comment>
<comment type="PTM">
    <text evidence="20">Glycosylated.</text>
</comment>
<comment type="miscellaneous">
    <text>Does not bind estradiol according to PubMed:18566127 and PubMed:16645038.</text>
</comment>
<comment type="similarity">
    <text evidence="3">Belongs to the G-protein coupled receptor 1 family.</text>
</comment>
<comment type="caution">
    <text evidence="30 31 32 33">Data is conflicting regarding whether it fulfills the criteria of a membrane-bound estrogen receptor (PubMed:15705806, PubMed:17379646). Other reports suggest that it is not (PubMed:16645038, PubMed:18566127).</text>
</comment>
<comment type="caution">
    <text evidence="29 30 33 34 35 36 37 38">Data is conflicting regarding whether it is localized either at the cell membrane (PM) (PubMed:15539556, PubMed:21149639, PubMed:21354433, PubMed:21427217, PubMed:21540189, PubMed:23674134). Other reports suggest that it localizes at the endoplasmic reticulum (ER) (PubMed:15705806, PubMed:18566127).</text>
</comment>
<comment type="online information" name="Atlas of Genetics and Cytogenetics in Oncology and Haematology">
    <link uri="https://atlasgeneticsoncology.org/gene/44344/GPER"/>
</comment>
<evidence type="ECO:0000250" key="1"/>
<evidence type="ECO:0000255" key="2"/>
<evidence type="ECO:0000255" key="3">
    <source>
        <dbReference type="PROSITE-ProRule" id="PRU00521"/>
    </source>
</evidence>
<evidence type="ECO:0000269" key="4">
    <source>
    </source>
</evidence>
<evidence type="ECO:0000269" key="5">
    <source>
    </source>
</evidence>
<evidence type="ECO:0000269" key="6">
    <source>
    </source>
</evidence>
<evidence type="ECO:0000269" key="7">
    <source>
    </source>
</evidence>
<evidence type="ECO:0000269" key="8">
    <source>
    </source>
</evidence>
<evidence type="ECO:0000269" key="9">
    <source>
    </source>
</evidence>
<evidence type="ECO:0000269" key="10">
    <source>
    </source>
</evidence>
<evidence type="ECO:0000269" key="11">
    <source>
    </source>
</evidence>
<evidence type="ECO:0000269" key="12">
    <source>
    </source>
</evidence>
<evidence type="ECO:0000269" key="13">
    <source>
    </source>
</evidence>
<evidence type="ECO:0000269" key="14">
    <source>
    </source>
</evidence>
<evidence type="ECO:0000269" key="15">
    <source>
    </source>
</evidence>
<evidence type="ECO:0000269" key="16">
    <source>
    </source>
</evidence>
<evidence type="ECO:0000269" key="17">
    <source>
    </source>
</evidence>
<evidence type="ECO:0000269" key="18">
    <source>
    </source>
</evidence>
<evidence type="ECO:0000269" key="19">
    <source>
    </source>
</evidence>
<evidence type="ECO:0000269" key="20">
    <source>
    </source>
</evidence>
<evidence type="ECO:0000269" key="21">
    <source>
    </source>
</evidence>
<evidence type="ECO:0000269" key="22">
    <source>
    </source>
</evidence>
<evidence type="ECO:0000269" key="23">
    <source>
    </source>
</evidence>
<evidence type="ECO:0000269" key="24">
    <source>
    </source>
</evidence>
<evidence type="ECO:0000269" key="25">
    <source>
    </source>
</evidence>
<evidence type="ECO:0000303" key="26">
    <source>
    </source>
</evidence>
<evidence type="ECO:0000303" key="27">
    <source>
    </source>
</evidence>
<evidence type="ECO:0000305" key="28"/>
<evidence type="ECO:0000305" key="29">
    <source>
    </source>
</evidence>
<evidence type="ECO:0000305" key="30">
    <source>
    </source>
</evidence>
<evidence type="ECO:0000305" key="31">
    <source>
    </source>
</evidence>
<evidence type="ECO:0000305" key="32">
    <source>
    </source>
</evidence>
<evidence type="ECO:0000305" key="33">
    <source>
    </source>
</evidence>
<evidence type="ECO:0000305" key="34">
    <source>
    </source>
</evidence>
<evidence type="ECO:0000305" key="35">
    <source>
    </source>
</evidence>
<evidence type="ECO:0000305" key="36">
    <source>
    </source>
</evidence>
<evidence type="ECO:0000305" key="37">
    <source>
    </source>
</evidence>
<evidence type="ECO:0000305" key="38">
    <source>
    </source>
</evidence>
<evidence type="ECO:0000312" key="39">
    <source>
        <dbReference type="HGNC" id="HGNC:4485"/>
    </source>
</evidence>
<evidence type="ECO:0007744" key="40">
    <source>
    </source>
</evidence>
<evidence type="ECO:0007829" key="41">
    <source>
        <dbReference type="PDB" id="8XOG"/>
    </source>
</evidence>
<keyword id="KW-0002">3D-structure</keyword>
<keyword id="KW-0007">Acetylation</keyword>
<keyword id="KW-0053">Apoptosis</keyword>
<keyword id="KW-0131">Cell cycle</keyword>
<keyword id="KW-1003">Cell membrane</keyword>
<keyword id="KW-0966">Cell projection</keyword>
<keyword id="KW-0963">Cytoplasm</keyword>
<keyword id="KW-0968">Cytoplasmic vesicle</keyword>
<keyword id="KW-0206">Cytoskeleton</keyword>
<keyword id="KW-0221">Differentiation</keyword>
<keyword id="KW-1015">Disulfide bond</keyword>
<keyword id="KW-0256">Endoplasmic reticulum</keyword>
<keyword id="KW-0967">Endosome</keyword>
<keyword id="KW-0297">G-protein coupled receptor</keyword>
<keyword id="KW-0325">Glycoprotein</keyword>
<keyword id="KW-0333">Golgi apparatus</keyword>
<keyword id="KW-0391">Immunity</keyword>
<keyword id="KW-0395">Inflammatory response</keyword>
<keyword id="KW-0399">Innate immunity</keyword>
<keyword id="KW-0472">Membrane</keyword>
<keyword id="KW-0496">Mitochondrion</keyword>
<keyword id="KW-0524">Neurogenesis</keyword>
<keyword id="KW-0539">Nucleus</keyword>
<keyword id="KW-0628">Postsynaptic cell membrane</keyword>
<keyword id="KW-0675">Receptor</keyword>
<keyword id="KW-1185">Reference proteome</keyword>
<keyword id="KW-0770">Synapse</keyword>
<keyword id="KW-0807">Transducer</keyword>
<keyword id="KW-0812">Transmembrane</keyword>
<keyword id="KW-1133">Transmembrane helix</keyword>
<keyword id="KW-0832">Ubl conjugation</keyword>